<protein>
    <recommendedName>
        <fullName evidence="1">Large ribosomal subunit protein bL32</fullName>
    </recommendedName>
    <alternativeName>
        <fullName evidence="3">50S ribosomal protein L32</fullName>
    </alternativeName>
</protein>
<gene>
    <name evidence="1" type="primary">rpmF</name>
    <name type="ordered locus">Acel_1575</name>
</gene>
<feature type="chain" id="PRO_0000296409" description="Large ribosomal subunit protein bL32">
    <location>
        <begin position="1"/>
        <end position="59"/>
    </location>
</feature>
<feature type="region of interest" description="Disordered" evidence="2">
    <location>
        <begin position="1"/>
        <end position="20"/>
    </location>
</feature>
<feature type="compositionally biased region" description="Basic residues" evidence="2">
    <location>
        <begin position="1"/>
        <end position="19"/>
    </location>
</feature>
<dbReference type="EMBL" id="CP000481">
    <property type="protein sequence ID" value="ABK53347.1"/>
    <property type="molecule type" value="Genomic_DNA"/>
</dbReference>
<dbReference type="RefSeq" id="WP_011720410.1">
    <property type="nucleotide sequence ID" value="NC_008578.1"/>
</dbReference>
<dbReference type="SMR" id="A0LV87"/>
<dbReference type="STRING" id="351607.Acel_1575"/>
<dbReference type="KEGG" id="ace:Acel_1575"/>
<dbReference type="eggNOG" id="COG0333">
    <property type="taxonomic scope" value="Bacteria"/>
</dbReference>
<dbReference type="HOGENOM" id="CLU_129084_1_1_11"/>
<dbReference type="InParanoid" id="A0LV87"/>
<dbReference type="OrthoDB" id="9807363at2"/>
<dbReference type="Proteomes" id="UP000008221">
    <property type="component" value="Chromosome"/>
</dbReference>
<dbReference type="GO" id="GO:0015934">
    <property type="term" value="C:large ribosomal subunit"/>
    <property type="evidence" value="ECO:0007669"/>
    <property type="project" value="InterPro"/>
</dbReference>
<dbReference type="GO" id="GO:0003735">
    <property type="term" value="F:structural constituent of ribosome"/>
    <property type="evidence" value="ECO:0007669"/>
    <property type="project" value="InterPro"/>
</dbReference>
<dbReference type="GO" id="GO:0006412">
    <property type="term" value="P:translation"/>
    <property type="evidence" value="ECO:0007669"/>
    <property type="project" value="UniProtKB-UniRule"/>
</dbReference>
<dbReference type="HAMAP" id="MF_00340">
    <property type="entry name" value="Ribosomal_bL32"/>
    <property type="match status" value="1"/>
</dbReference>
<dbReference type="InterPro" id="IPR002677">
    <property type="entry name" value="Ribosomal_bL32"/>
</dbReference>
<dbReference type="InterPro" id="IPR044957">
    <property type="entry name" value="Ribosomal_bL32_bact"/>
</dbReference>
<dbReference type="InterPro" id="IPR011332">
    <property type="entry name" value="Ribosomal_zn-bd"/>
</dbReference>
<dbReference type="NCBIfam" id="TIGR01031">
    <property type="entry name" value="rpmF_bact"/>
    <property type="match status" value="1"/>
</dbReference>
<dbReference type="PANTHER" id="PTHR35534">
    <property type="entry name" value="50S RIBOSOMAL PROTEIN L32"/>
    <property type="match status" value="1"/>
</dbReference>
<dbReference type="PANTHER" id="PTHR35534:SF1">
    <property type="entry name" value="LARGE RIBOSOMAL SUBUNIT PROTEIN BL32"/>
    <property type="match status" value="1"/>
</dbReference>
<dbReference type="Pfam" id="PF01783">
    <property type="entry name" value="Ribosomal_L32p"/>
    <property type="match status" value="1"/>
</dbReference>
<dbReference type="SUPFAM" id="SSF57829">
    <property type="entry name" value="Zn-binding ribosomal proteins"/>
    <property type="match status" value="1"/>
</dbReference>
<organism>
    <name type="scientific">Acidothermus cellulolyticus (strain ATCC 43068 / DSM 8971 / 11B)</name>
    <dbReference type="NCBI Taxonomy" id="351607"/>
    <lineage>
        <taxon>Bacteria</taxon>
        <taxon>Bacillati</taxon>
        <taxon>Actinomycetota</taxon>
        <taxon>Actinomycetes</taxon>
        <taxon>Acidothermales</taxon>
        <taxon>Acidothermaceae</taxon>
        <taxon>Acidothermus</taxon>
    </lineage>
</organism>
<reference key="1">
    <citation type="journal article" date="2009" name="Genome Res.">
        <title>Complete genome of the cellulolytic thermophile Acidothermus cellulolyticus 11B provides insights into its ecophysiological and evolutionary adaptations.</title>
        <authorList>
            <person name="Barabote R.D."/>
            <person name="Xie G."/>
            <person name="Leu D.H."/>
            <person name="Normand P."/>
            <person name="Necsulea A."/>
            <person name="Daubin V."/>
            <person name="Medigue C."/>
            <person name="Adney W.S."/>
            <person name="Xu X.C."/>
            <person name="Lapidus A."/>
            <person name="Parales R.E."/>
            <person name="Detter C."/>
            <person name="Pujic P."/>
            <person name="Bruce D."/>
            <person name="Lavire C."/>
            <person name="Challacombe J.F."/>
            <person name="Brettin T.S."/>
            <person name="Berry A.M."/>
        </authorList>
    </citation>
    <scope>NUCLEOTIDE SEQUENCE [LARGE SCALE GENOMIC DNA]</scope>
    <source>
        <strain>ATCC 43068 / DSM 8971 / 11B</strain>
    </source>
</reference>
<name>RL32_ACIC1</name>
<sequence length="59" mass="6759">MPVPKRRMSRSNTRSRRAQWKAALPTLVRCNNPACRQPKLPHVVCPNCGTYDRRPVLSS</sequence>
<accession>A0LV87</accession>
<proteinExistence type="inferred from homology"/>
<keyword id="KW-1185">Reference proteome</keyword>
<keyword id="KW-0687">Ribonucleoprotein</keyword>
<keyword id="KW-0689">Ribosomal protein</keyword>
<comment type="similarity">
    <text evidence="1">Belongs to the bacterial ribosomal protein bL32 family.</text>
</comment>
<evidence type="ECO:0000255" key="1">
    <source>
        <dbReference type="HAMAP-Rule" id="MF_00340"/>
    </source>
</evidence>
<evidence type="ECO:0000256" key="2">
    <source>
        <dbReference type="SAM" id="MobiDB-lite"/>
    </source>
</evidence>
<evidence type="ECO:0000305" key="3"/>